<accession>A5F8Z0</accession>
<accession>C3LXZ0</accession>
<evidence type="ECO:0000255" key="1">
    <source>
        <dbReference type="HAMAP-Rule" id="MF_00500"/>
    </source>
</evidence>
<evidence type="ECO:0000256" key="2">
    <source>
        <dbReference type="SAM" id="MobiDB-lite"/>
    </source>
</evidence>
<evidence type="ECO:0000305" key="3"/>
<proteinExistence type="inferred from homology"/>
<name>RS20_VIBC3</name>
<keyword id="KW-0687">Ribonucleoprotein</keyword>
<keyword id="KW-0689">Ribosomal protein</keyword>
<keyword id="KW-0694">RNA-binding</keyword>
<keyword id="KW-0699">rRNA-binding</keyword>
<organism>
    <name type="scientific">Vibrio cholerae serotype O1 (strain ATCC 39541 / Classical Ogawa 395 / O395)</name>
    <dbReference type="NCBI Taxonomy" id="345073"/>
    <lineage>
        <taxon>Bacteria</taxon>
        <taxon>Pseudomonadati</taxon>
        <taxon>Pseudomonadota</taxon>
        <taxon>Gammaproteobacteria</taxon>
        <taxon>Vibrionales</taxon>
        <taxon>Vibrionaceae</taxon>
        <taxon>Vibrio</taxon>
    </lineage>
</organism>
<sequence>MANNKSAKKRAIQAEKRRQHNASRRSMMRTYMKKTVAAIAAGDKEAATAAFAVVTPILDRMATKGLIHKNKAARHKSRFFAAINAL</sequence>
<gene>
    <name evidence="1" type="primary">rpsT</name>
    <name type="ordered locus">VC0395_A0211</name>
    <name type="ordered locus">VC395_0696</name>
</gene>
<comment type="function">
    <text evidence="1">Binds directly to 16S ribosomal RNA.</text>
</comment>
<comment type="similarity">
    <text evidence="1">Belongs to the bacterial ribosomal protein bS20 family.</text>
</comment>
<reference key="1">
    <citation type="submission" date="2007-03" db="EMBL/GenBank/DDBJ databases">
        <authorList>
            <person name="Heidelberg J."/>
        </authorList>
    </citation>
    <scope>NUCLEOTIDE SEQUENCE [LARGE SCALE GENOMIC DNA]</scope>
    <source>
        <strain>ATCC 39541 / Classical Ogawa 395 / O395</strain>
    </source>
</reference>
<reference key="2">
    <citation type="journal article" date="2008" name="PLoS ONE">
        <title>A recalibrated molecular clock and independent origins for the cholera pandemic clones.</title>
        <authorList>
            <person name="Feng L."/>
            <person name="Reeves P.R."/>
            <person name="Lan R."/>
            <person name="Ren Y."/>
            <person name="Gao C."/>
            <person name="Zhou Z."/>
            <person name="Ren Y."/>
            <person name="Cheng J."/>
            <person name="Wang W."/>
            <person name="Wang J."/>
            <person name="Qian W."/>
            <person name="Li D."/>
            <person name="Wang L."/>
        </authorList>
    </citation>
    <scope>NUCLEOTIDE SEQUENCE [LARGE SCALE GENOMIC DNA]</scope>
    <source>
        <strain>ATCC 39541 / Classical Ogawa 395 / O395</strain>
    </source>
</reference>
<feature type="chain" id="PRO_1000072440" description="Small ribosomal subunit protein bS20">
    <location>
        <begin position="1"/>
        <end position="86"/>
    </location>
</feature>
<feature type="region of interest" description="Disordered" evidence="2">
    <location>
        <begin position="1"/>
        <end position="27"/>
    </location>
</feature>
<dbReference type="EMBL" id="CP000627">
    <property type="protein sequence ID" value="ABQ20170.1"/>
    <property type="molecule type" value="Genomic_DNA"/>
</dbReference>
<dbReference type="EMBL" id="CP001235">
    <property type="protein sequence ID" value="ACP08714.1"/>
    <property type="molecule type" value="Genomic_DNA"/>
</dbReference>
<dbReference type="RefSeq" id="WP_000002742.1">
    <property type="nucleotide sequence ID" value="NZ_JAACZH010000006.1"/>
</dbReference>
<dbReference type="SMR" id="A5F8Z0"/>
<dbReference type="GeneID" id="94014548"/>
<dbReference type="KEGG" id="vco:VC0395_A0211"/>
<dbReference type="KEGG" id="vcr:VC395_0696"/>
<dbReference type="PATRIC" id="fig|345073.21.peg.678"/>
<dbReference type="eggNOG" id="COG0268">
    <property type="taxonomic scope" value="Bacteria"/>
</dbReference>
<dbReference type="HOGENOM" id="CLU_160655_4_0_6"/>
<dbReference type="OrthoDB" id="9807974at2"/>
<dbReference type="Proteomes" id="UP000000249">
    <property type="component" value="Chromosome 2"/>
</dbReference>
<dbReference type="GO" id="GO:0005829">
    <property type="term" value="C:cytosol"/>
    <property type="evidence" value="ECO:0007669"/>
    <property type="project" value="TreeGrafter"/>
</dbReference>
<dbReference type="GO" id="GO:0015935">
    <property type="term" value="C:small ribosomal subunit"/>
    <property type="evidence" value="ECO:0007669"/>
    <property type="project" value="TreeGrafter"/>
</dbReference>
<dbReference type="GO" id="GO:0070181">
    <property type="term" value="F:small ribosomal subunit rRNA binding"/>
    <property type="evidence" value="ECO:0007669"/>
    <property type="project" value="TreeGrafter"/>
</dbReference>
<dbReference type="GO" id="GO:0003735">
    <property type="term" value="F:structural constituent of ribosome"/>
    <property type="evidence" value="ECO:0007669"/>
    <property type="project" value="InterPro"/>
</dbReference>
<dbReference type="GO" id="GO:0006412">
    <property type="term" value="P:translation"/>
    <property type="evidence" value="ECO:0007669"/>
    <property type="project" value="UniProtKB-UniRule"/>
</dbReference>
<dbReference type="FunFam" id="1.20.58.110:FF:000001">
    <property type="entry name" value="30S ribosomal protein S20"/>
    <property type="match status" value="1"/>
</dbReference>
<dbReference type="Gene3D" id="1.20.58.110">
    <property type="entry name" value="Ribosomal protein S20"/>
    <property type="match status" value="1"/>
</dbReference>
<dbReference type="HAMAP" id="MF_00500">
    <property type="entry name" value="Ribosomal_bS20"/>
    <property type="match status" value="1"/>
</dbReference>
<dbReference type="InterPro" id="IPR002583">
    <property type="entry name" value="Ribosomal_bS20"/>
</dbReference>
<dbReference type="InterPro" id="IPR036510">
    <property type="entry name" value="Ribosomal_bS20_sf"/>
</dbReference>
<dbReference type="NCBIfam" id="TIGR00029">
    <property type="entry name" value="S20"/>
    <property type="match status" value="1"/>
</dbReference>
<dbReference type="PANTHER" id="PTHR33398">
    <property type="entry name" value="30S RIBOSOMAL PROTEIN S20"/>
    <property type="match status" value="1"/>
</dbReference>
<dbReference type="PANTHER" id="PTHR33398:SF1">
    <property type="entry name" value="SMALL RIBOSOMAL SUBUNIT PROTEIN BS20C"/>
    <property type="match status" value="1"/>
</dbReference>
<dbReference type="Pfam" id="PF01649">
    <property type="entry name" value="Ribosomal_S20p"/>
    <property type="match status" value="1"/>
</dbReference>
<dbReference type="SUPFAM" id="SSF46992">
    <property type="entry name" value="Ribosomal protein S20"/>
    <property type="match status" value="1"/>
</dbReference>
<protein>
    <recommendedName>
        <fullName evidence="1">Small ribosomal subunit protein bS20</fullName>
    </recommendedName>
    <alternativeName>
        <fullName evidence="3">30S ribosomal protein S20</fullName>
    </alternativeName>
</protein>